<reference key="1">
    <citation type="submission" date="2008-02" db="EMBL/GenBank/DDBJ databases">
        <title>Complete sequence of Haemophilus somnus 2336.</title>
        <authorList>
            <consortium name="US DOE Joint Genome Institute"/>
            <person name="Siddaramappa S."/>
            <person name="Duncan A.J."/>
            <person name="Challacombe J.F."/>
            <person name="Rainey D."/>
            <person name="Gillaspy A.F."/>
            <person name="Carson M."/>
            <person name="Gipson J."/>
            <person name="Gipson M."/>
            <person name="Bruce D."/>
            <person name="Detter J.C."/>
            <person name="Han C.S."/>
            <person name="Land M."/>
            <person name="Tapia R."/>
            <person name="Thompson L.S."/>
            <person name="Orvis J."/>
            <person name="Zaitshik J."/>
            <person name="Barnes G."/>
            <person name="Brettin T.S."/>
            <person name="Dyer D.W."/>
            <person name="Inzana T.J."/>
        </authorList>
    </citation>
    <scope>NUCLEOTIDE SEQUENCE [LARGE SCALE GENOMIC DNA]</scope>
    <source>
        <strain>2336</strain>
    </source>
</reference>
<sequence>MPIITLPDGSQRQFDNPVSVLEVAQSIGSGLAKATIAGRVNGERRDASDMISEDANLEIITAKDEDGLEIIRHSTAHLLGHAIKQLFPNVKMAIGPTIDNGFYYDIDLDRSLTQEDIDTLEKRMLELAKTNYDVIKKRVSWQEARDTFESRAEPYKIAILDENIAKDDQPALYHHEEYIDMCRGPHVPNMRFCHHFKLMKVAGAYWRGNSDNKMLQRIYGTAWADKKQLADYLHRLEEAAKRDHRKIGKALNLYHMQEEAPGMVFWHNDGWTIFRELETFVRTKLKEYDYQEVKGPFMMDRVLWERTGHWQNYADLMFTTQSENREYAIKPMNCPGHVQIFNQGLKSYRDLPIRMAEFGSCHRNEPSGSLHGLMRVRGFTQDDAHIFCTEDQIESEVTSCIKMVYDIYSTFGFTDIFVKLSTRPEKRIGEDVMWDRAEQGLANALKHNGLEYEIQEGEGAFYGPKIEFALRDCLDREWQCGTIQLDFALPGRLDATYVAEDNARRTPVMIHRAILGSIERFIGIITEEYAGFFPAWLAPIQAVVMNITDSQADYVQKVVKQFSEAGLRVKADIRNEKVGFKIREHTLRRVPYMLVCGDKEIVENKIAVRTRKGTDLGTFSVEEFVEILKQQVRKRELTLLGE</sequence>
<name>SYT_HISS2</name>
<accession>B0UU42</accession>
<feature type="chain" id="PRO_1000077361" description="Threonine--tRNA ligase">
    <location>
        <begin position="1"/>
        <end position="642"/>
    </location>
</feature>
<feature type="domain" description="TGS" evidence="2">
    <location>
        <begin position="1"/>
        <end position="61"/>
    </location>
</feature>
<feature type="region of interest" description="Catalytic" evidence="1">
    <location>
        <begin position="243"/>
        <end position="534"/>
    </location>
</feature>
<feature type="binding site" evidence="1">
    <location>
        <position position="334"/>
    </location>
    <ligand>
        <name>Zn(2+)</name>
        <dbReference type="ChEBI" id="CHEBI:29105"/>
    </ligand>
</feature>
<feature type="binding site" evidence="1">
    <location>
        <position position="385"/>
    </location>
    <ligand>
        <name>Zn(2+)</name>
        <dbReference type="ChEBI" id="CHEBI:29105"/>
    </ligand>
</feature>
<feature type="binding site" evidence="1">
    <location>
        <position position="511"/>
    </location>
    <ligand>
        <name>Zn(2+)</name>
        <dbReference type="ChEBI" id="CHEBI:29105"/>
    </ligand>
</feature>
<gene>
    <name evidence="1" type="primary">thrS</name>
    <name type="ordered locus">HSM_1319</name>
</gene>
<comment type="function">
    <text evidence="1">Catalyzes the attachment of threonine to tRNA(Thr) in a two-step reaction: L-threonine is first activated by ATP to form Thr-AMP and then transferred to the acceptor end of tRNA(Thr). Also edits incorrectly charged L-seryl-tRNA(Thr).</text>
</comment>
<comment type="catalytic activity">
    <reaction evidence="1">
        <text>tRNA(Thr) + L-threonine + ATP = L-threonyl-tRNA(Thr) + AMP + diphosphate + H(+)</text>
        <dbReference type="Rhea" id="RHEA:24624"/>
        <dbReference type="Rhea" id="RHEA-COMP:9670"/>
        <dbReference type="Rhea" id="RHEA-COMP:9704"/>
        <dbReference type="ChEBI" id="CHEBI:15378"/>
        <dbReference type="ChEBI" id="CHEBI:30616"/>
        <dbReference type="ChEBI" id="CHEBI:33019"/>
        <dbReference type="ChEBI" id="CHEBI:57926"/>
        <dbReference type="ChEBI" id="CHEBI:78442"/>
        <dbReference type="ChEBI" id="CHEBI:78534"/>
        <dbReference type="ChEBI" id="CHEBI:456215"/>
        <dbReference type="EC" id="6.1.1.3"/>
    </reaction>
</comment>
<comment type="cofactor">
    <cofactor evidence="1">
        <name>Zn(2+)</name>
        <dbReference type="ChEBI" id="CHEBI:29105"/>
    </cofactor>
    <text evidence="1">Binds 1 zinc ion per subunit.</text>
</comment>
<comment type="subunit">
    <text evidence="1">Homodimer.</text>
</comment>
<comment type="subcellular location">
    <subcellularLocation>
        <location evidence="1">Cytoplasm</location>
    </subcellularLocation>
</comment>
<comment type="similarity">
    <text evidence="1">Belongs to the class-II aminoacyl-tRNA synthetase family.</text>
</comment>
<protein>
    <recommendedName>
        <fullName evidence="1">Threonine--tRNA ligase</fullName>
        <ecNumber evidence="1">6.1.1.3</ecNumber>
    </recommendedName>
    <alternativeName>
        <fullName evidence="1">Threonyl-tRNA synthetase</fullName>
        <shortName evidence="1">ThrRS</shortName>
    </alternativeName>
</protein>
<keyword id="KW-0030">Aminoacyl-tRNA synthetase</keyword>
<keyword id="KW-0067">ATP-binding</keyword>
<keyword id="KW-0963">Cytoplasm</keyword>
<keyword id="KW-0436">Ligase</keyword>
<keyword id="KW-0479">Metal-binding</keyword>
<keyword id="KW-0547">Nucleotide-binding</keyword>
<keyword id="KW-0648">Protein biosynthesis</keyword>
<keyword id="KW-0694">RNA-binding</keyword>
<keyword id="KW-0820">tRNA-binding</keyword>
<keyword id="KW-0862">Zinc</keyword>
<proteinExistence type="inferred from homology"/>
<evidence type="ECO:0000255" key="1">
    <source>
        <dbReference type="HAMAP-Rule" id="MF_00184"/>
    </source>
</evidence>
<evidence type="ECO:0000255" key="2">
    <source>
        <dbReference type="PROSITE-ProRule" id="PRU01228"/>
    </source>
</evidence>
<organism>
    <name type="scientific">Histophilus somni (strain 2336)</name>
    <name type="common">Haemophilus somnus</name>
    <dbReference type="NCBI Taxonomy" id="228400"/>
    <lineage>
        <taxon>Bacteria</taxon>
        <taxon>Pseudomonadati</taxon>
        <taxon>Pseudomonadota</taxon>
        <taxon>Gammaproteobacteria</taxon>
        <taxon>Pasteurellales</taxon>
        <taxon>Pasteurellaceae</taxon>
        <taxon>Histophilus</taxon>
    </lineage>
</organism>
<dbReference type="EC" id="6.1.1.3" evidence="1"/>
<dbReference type="EMBL" id="CP000947">
    <property type="protein sequence ID" value="ACA31053.1"/>
    <property type="molecule type" value="Genomic_DNA"/>
</dbReference>
<dbReference type="RefSeq" id="WP_012340476.1">
    <property type="nucleotide sequence ID" value="NC_010519.1"/>
</dbReference>
<dbReference type="SMR" id="B0UU42"/>
<dbReference type="STRING" id="228400.HSM_1319"/>
<dbReference type="GeneID" id="31487622"/>
<dbReference type="KEGG" id="hsm:HSM_1319"/>
<dbReference type="HOGENOM" id="CLU_008554_0_1_6"/>
<dbReference type="GO" id="GO:0005829">
    <property type="term" value="C:cytosol"/>
    <property type="evidence" value="ECO:0007669"/>
    <property type="project" value="TreeGrafter"/>
</dbReference>
<dbReference type="GO" id="GO:0005524">
    <property type="term" value="F:ATP binding"/>
    <property type="evidence" value="ECO:0007669"/>
    <property type="project" value="UniProtKB-UniRule"/>
</dbReference>
<dbReference type="GO" id="GO:0046872">
    <property type="term" value="F:metal ion binding"/>
    <property type="evidence" value="ECO:0007669"/>
    <property type="project" value="UniProtKB-KW"/>
</dbReference>
<dbReference type="GO" id="GO:0004829">
    <property type="term" value="F:threonine-tRNA ligase activity"/>
    <property type="evidence" value="ECO:0007669"/>
    <property type="project" value="UniProtKB-UniRule"/>
</dbReference>
<dbReference type="GO" id="GO:0000049">
    <property type="term" value="F:tRNA binding"/>
    <property type="evidence" value="ECO:0007669"/>
    <property type="project" value="UniProtKB-KW"/>
</dbReference>
<dbReference type="GO" id="GO:0006435">
    <property type="term" value="P:threonyl-tRNA aminoacylation"/>
    <property type="evidence" value="ECO:0007669"/>
    <property type="project" value="UniProtKB-UniRule"/>
</dbReference>
<dbReference type="CDD" id="cd01667">
    <property type="entry name" value="TGS_ThrRS"/>
    <property type="match status" value="1"/>
</dbReference>
<dbReference type="CDD" id="cd00860">
    <property type="entry name" value="ThrRS_anticodon"/>
    <property type="match status" value="1"/>
</dbReference>
<dbReference type="CDD" id="cd00771">
    <property type="entry name" value="ThrRS_core"/>
    <property type="match status" value="1"/>
</dbReference>
<dbReference type="FunFam" id="3.10.20.30:FF:000005">
    <property type="entry name" value="Threonine--tRNA ligase"/>
    <property type="match status" value="1"/>
</dbReference>
<dbReference type="FunFam" id="3.30.54.20:FF:000002">
    <property type="entry name" value="Threonine--tRNA ligase"/>
    <property type="match status" value="1"/>
</dbReference>
<dbReference type="FunFam" id="3.30.930.10:FF:000002">
    <property type="entry name" value="Threonine--tRNA ligase"/>
    <property type="match status" value="1"/>
</dbReference>
<dbReference type="FunFam" id="3.40.50.800:FF:000001">
    <property type="entry name" value="Threonine--tRNA ligase"/>
    <property type="match status" value="1"/>
</dbReference>
<dbReference type="FunFam" id="3.30.980.10:FF:000005">
    <property type="entry name" value="Threonyl-tRNA synthetase, mitochondrial"/>
    <property type="match status" value="1"/>
</dbReference>
<dbReference type="Gene3D" id="3.10.20.30">
    <property type="match status" value="1"/>
</dbReference>
<dbReference type="Gene3D" id="3.30.54.20">
    <property type="match status" value="1"/>
</dbReference>
<dbReference type="Gene3D" id="3.40.50.800">
    <property type="entry name" value="Anticodon-binding domain"/>
    <property type="match status" value="1"/>
</dbReference>
<dbReference type="Gene3D" id="3.30.930.10">
    <property type="entry name" value="Bira Bifunctional Protein, Domain 2"/>
    <property type="match status" value="1"/>
</dbReference>
<dbReference type="Gene3D" id="3.30.980.10">
    <property type="entry name" value="Threonyl-trna Synthetase, Chain A, domain 2"/>
    <property type="match status" value="1"/>
</dbReference>
<dbReference type="HAMAP" id="MF_00184">
    <property type="entry name" value="Thr_tRNA_synth"/>
    <property type="match status" value="1"/>
</dbReference>
<dbReference type="InterPro" id="IPR002314">
    <property type="entry name" value="aa-tRNA-synt_IIb"/>
</dbReference>
<dbReference type="InterPro" id="IPR006195">
    <property type="entry name" value="aa-tRNA-synth_II"/>
</dbReference>
<dbReference type="InterPro" id="IPR045864">
    <property type="entry name" value="aa-tRNA-synth_II/BPL/LPL"/>
</dbReference>
<dbReference type="InterPro" id="IPR004154">
    <property type="entry name" value="Anticodon-bd"/>
</dbReference>
<dbReference type="InterPro" id="IPR036621">
    <property type="entry name" value="Anticodon-bd_dom_sf"/>
</dbReference>
<dbReference type="InterPro" id="IPR012675">
    <property type="entry name" value="Beta-grasp_dom_sf"/>
</dbReference>
<dbReference type="InterPro" id="IPR004095">
    <property type="entry name" value="TGS"/>
</dbReference>
<dbReference type="InterPro" id="IPR012676">
    <property type="entry name" value="TGS-like"/>
</dbReference>
<dbReference type="InterPro" id="IPR002320">
    <property type="entry name" value="Thr-tRNA-ligase_IIa"/>
</dbReference>
<dbReference type="InterPro" id="IPR018163">
    <property type="entry name" value="Thr/Ala-tRNA-synth_IIc_edit"/>
</dbReference>
<dbReference type="InterPro" id="IPR047246">
    <property type="entry name" value="ThrRS_anticodon"/>
</dbReference>
<dbReference type="InterPro" id="IPR033728">
    <property type="entry name" value="ThrRS_core"/>
</dbReference>
<dbReference type="InterPro" id="IPR012947">
    <property type="entry name" value="tRNA_SAD"/>
</dbReference>
<dbReference type="NCBIfam" id="TIGR00418">
    <property type="entry name" value="thrS"/>
    <property type="match status" value="1"/>
</dbReference>
<dbReference type="PANTHER" id="PTHR11451:SF44">
    <property type="entry name" value="THREONINE--TRNA LIGASE, CHLOROPLASTIC_MITOCHONDRIAL 2"/>
    <property type="match status" value="1"/>
</dbReference>
<dbReference type="PANTHER" id="PTHR11451">
    <property type="entry name" value="THREONINE-TRNA LIGASE"/>
    <property type="match status" value="1"/>
</dbReference>
<dbReference type="Pfam" id="PF03129">
    <property type="entry name" value="HGTP_anticodon"/>
    <property type="match status" value="1"/>
</dbReference>
<dbReference type="Pfam" id="PF02824">
    <property type="entry name" value="TGS"/>
    <property type="match status" value="1"/>
</dbReference>
<dbReference type="Pfam" id="PF00587">
    <property type="entry name" value="tRNA-synt_2b"/>
    <property type="match status" value="1"/>
</dbReference>
<dbReference type="Pfam" id="PF07973">
    <property type="entry name" value="tRNA_SAD"/>
    <property type="match status" value="1"/>
</dbReference>
<dbReference type="PRINTS" id="PR01047">
    <property type="entry name" value="TRNASYNTHTHR"/>
</dbReference>
<dbReference type="SMART" id="SM00863">
    <property type="entry name" value="tRNA_SAD"/>
    <property type="match status" value="1"/>
</dbReference>
<dbReference type="SUPFAM" id="SSF52954">
    <property type="entry name" value="Class II aaRS ABD-related"/>
    <property type="match status" value="1"/>
</dbReference>
<dbReference type="SUPFAM" id="SSF55681">
    <property type="entry name" value="Class II aaRS and biotin synthetases"/>
    <property type="match status" value="1"/>
</dbReference>
<dbReference type="SUPFAM" id="SSF81271">
    <property type="entry name" value="TGS-like"/>
    <property type="match status" value="1"/>
</dbReference>
<dbReference type="SUPFAM" id="SSF55186">
    <property type="entry name" value="ThrRS/AlaRS common domain"/>
    <property type="match status" value="1"/>
</dbReference>
<dbReference type="PROSITE" id="PS50862">
    <property type="entry name" value="AA_TRNA_LIGASE_II"/>
    <property type="match status" value="1"/>
</dbReference>
<dbReference type="PROSITE" id="PS51880">
    <property type="entry name" value="TGS"/>
    <property type="match status" value="1"/>
</dbReference>